<name>MENG_BACFR</name>
<feature type="chain" id="PRO_0000193241" description="Demethylmenaquinone methyltransferase">
    <location>
        <begin position="1"/>
        <end position="245"/>
    </location>
</feature>
<feature type="binding site" evidence="1">
    <location>
        <position position="70"/>
    </location>
    <ligand>
        <name>S-adenosyl-L-methionine</name>
        <dbReference type="ChEBI" id="CHEBI:59789"/>
    </ligand>
</feature>
<feature type="binding site" evidence="1">
    <location>
        <position position="90"/>
    </location>
    <ligand>
        <name>S-adenosyl-L-methionine</name>
        <dbReference type="ChEBI" id="CHEBI:59789"/>
    </ligand>
</feature>
<feature type="binding site" evidence="1">
    <location>
        <begin position="118"/>
        <end position="119"/>
    </location>
    <ligand>
        <name>S-adenosyl-L-methionine</name>
        <dbReference type="ChEBI" id="CHEBI:59789"/>
    </ligand>
</feature>
<accession>Q64XV8</accession>
<gene>
    <name evidence="1" type="primary">menG</name>
    <name type="ordered locus">BF0917</name>
</gene>
<comment type="function">
    <text evidence="1">Methyltransferase required for the conversion of demethylmenaquinol (DMKH2) to menaquinol (MKH2).</text>
</comment>
<comment type="catalytic activity">
    <reaction evidence="1">
        <text>a 2-demethylmenaquinol + S-adenosyl-L-methionine = a menaquinol + S-adenosyl-L-homocysteine + H(+)</text>
        <dbReference type="Rhea" id="RHEA:42640"/>
        <dbReference type="Rhea" id="RHEA-COMP:9539"/>
        <dbReference type="Rhea" id="RHEA-COMP:9563"/>
        <dbReference type="ChEBI" id="CHEBI:15378"/>
        <dbReference type="ChEBI" id="CHEBI:18151"/>
        <dbReference type="ChEBI" id="CHEBI:55437"/>
        <dbReference type="ChEBI" id="CHEBI:57856"/>
        <dbReference type="ChEBI" id="CHEBI:59789"/>
        <dbReference type="EC" id="2.1.1.163"/>
    </reaction>
</comment>
<comment type="pathway">
    <text evidence="1">Quinol/quinone metabolism; menaquinone biosynthesis; menaquinol from 1,4-dihydroxy-2-naphthoate: step 2/2.</text>
</comment>
<comment type="similarity">
    <text evidence="1">Belongs to the class I-like SAM-binding methyltransferase superfamily. MenG/UbiE family.</text>
</comment>
<organism>
    <name type="scientific">Bacteroides fragilis (strain YCH46)</name>
    <dbReference type="NCBI Taxonomy" id="295405"/>
    <lineage>
        <taxon>Bacteria</taxon>
        <taxon>Pseudomonadati</taxon>
        <taxon>Bacteroidota</taxon>
        <taxon>Bacteroidia</taxon>
        <taxon>Bacteroidales</taxon>
        <taxon>Bacteroidaceae</taxon>
        <taxon>Bacteroides</taxon>
    </lineage>
</organism>
<evidence type="ECO:0000255" key="1">
    <source>
        <dbReference type="HAMAP-Rule" id="MF_01813"/>
    </source>
</evidence>
<sequence>MNYPQEKIKPYSNDGKKSEQVEQMFDNIAPAYDQLNHTLSLGIDRSWRRKAINWLKPFRPQQIMDVATGTGDFAILACHELQPEQLIGTDISEGMMNVGREKVKKEGLSEKISFAREDCTSLSFADNRFDAITVAFGIRNFEDLDKGLSEMYRVLKTGGHLVILELTTPDRFPMKQMFTIYSKIVIPTLGKLLSKDNSAYSYLPQTIKAFPQGEVMKNVISRVGFSQVQFRRLTFGICTLYTATK</sequence>
<protein>
    <recommendedName>
        <fullName evidence="1">Demethylmenaquinone methyltransferase</fullName>
        <ecNumber evidence="1">2.1.1.163</ecNumber>
    </recommendedName>
</protein>
<dbReference type="EC" id="2.1.1.163" evidence="1"/>
<dbReference type="EMBL" id="AP006841">
    <property type="protein sequence ID" value="BAD47668.1"/>
    <property type="molecule type" value="Genomic_DNA"/>
</dbReference>
<dbReference type="RefSeq" id="YP_098202.1">
    <property type="nucleotide sequence ID" value="NC_006347.1"/>
</dbReference>
<dbReference type="SMR" id="Q64XV8"/>
<dbReference type="STRING" id="295405.BF0917"/>
<dbReference type="KEGG" id="bfr:BF0917"/>
<dbReference type="PATRIC" id="fig|295405.11.peg.920"/>
<dbReference type="HOGENOM" id="CLU_037990_0_0_10"/>
<dbReference type="OrthoDB" id="9808140at2"/>
<dbReference type="UniPathway" id="UPA00079">
    <property type="reaction ID" value="UER00169"/>
</dbReference>
<dbReference type="Proteomes" id="UP000002197">
    <property type="component" value="Chromosome"/>
</dbReference>
<dbReference type="GO" id="GO:0043770">
    <property type="term" value="F:demethylmenaquinone methyltransferase activity"/>
    <property type="evidence" value="ECO:0007669"/>
    <property type="project" value="UniProtKB-UniRule"/>
</dbReference>
<dbReference type="GO" id="GO:0009234">
    <property type="term" value="P:menaquinone biosynthetic process"/>
    <property type="evidence" value="ECO:0007669"/>
    <property type="project" value="UniProtKB-UniRule"/>
</dbReference>
<dbReference type="GO" id="GO:0032259">
    <property type="term" value="P:methylation"/>
    <property type="evidence" value="ECO:0007669"/>
    <property type="project" value="UniProtKB-KW"/>
</dbReference>
<dbReference type="CDD" id="cd02440">
    <property type="entry name" value="AdoMet_MTases"/>
    <property type="match status" value="1"/>
</dbReference>
<dbReference type="Gene3D" id="3.40.50.150">
    <property type="entry name" value="Vaccinia Virus protein VP39"/>
    <property type="match status" value="1"/>
</dbReference>
<dbReference type="HAMAP" id="MF_01813">
    <property type="entry name" value="MenG_UbiE_methyltr"/>
    <property type="match status" value="1"/>
</dbReference>
<dbReference type="InterPro" id="IPR029063">
    <property type="entry name" value="SAM-dependent_MTases_sf"/>
</dbReference>
<dbReference type="InterPro" id="IPR004033">
    <property type="entry name" value="UbiE/COQ5_MeTrFase"/>
</dbReference>
<dbReference type="InterPro" id="IPR023576">
    <property type="entry name" value="UbiE/COQ5_MeTrFase_CS"/>
</dbReference>
<dbReference type="NCBIfam" id="TIGR01934">
    <property type="entry name" value="MenG_MenH_UbiE"/>
    <property type="match status" value="1"/>
</dbReference>
<dbReference type="NCBIfam" id="NF001244">
    <property type="entry name" value="PRK00216.1-5"/>
    <property type="match status" value="1"/>
</dbReference>
<dbReference type="PANTHER" id="PTHR43591:SF24">
    <property type="entry name" value="2-METHOXY-6-POLYPRENYL-1,4-BENZOQUINOL METHYLASE, MITOCHONDRIAL"/>
    <property type="match status" value="1"/>
</dbReference>
<dbReference type="PANTHER" id="PTHR43591">
    <property type="entry name" value="METHYLTRANSFERASE"/>
    <property type="match status" value="1"/>
</dbReference>
<dbReference type="Pfam" id="PF01209">
    <property type="entry name" value="Ubie_methyltran"/>
    <property type="match status" value="1"/>
</dbReference>
<dbReference type="SUPFAM" id="SSF53335">
    <property type="entry name" value="S-adenosyl-L-methionine-dependent methyltransferases"/>
    <property type="match status" value="1"/>
</dbReference>
<dbReference type="PROSITE" id="PS51608">
    <property type="entry name" value="SAM_MT_UBIE"/>
    <property type="match status" value="1"/>
</dbReference>
<dbReference type="PROSITE" id="PS01183">
    <property type="entry name" value="UBIE_1"/>
    <property type="match status" value="1"/>
</dbReference>
<keyword id="KW-0474">Menaquinone biosynthesis</keyword>
<keyword id="KW-0489">Methyltransferase</keyword>
<keyword id="KW-0949">S-adenosyl-L-methionine</keyword>
<keyword id="KW-0808">Transferase</keyword>
<reference key="1">
    <citation type="journal article" date="2004" name="Proc. Natl. Acad. Sci. U.S.A.">
        <title>Genomic analysis of Bacteroides fragilis reveals extensive DNA inversions regulating cell surface adaptation.</title>
        <authorList>
            <person name="Kuwahara T."/>
            <person name="Yamashita A."/>
            <person name="Hirakawa H."/>
            <person name="Nakayama H."/>
            <person name="Toh H."/>
            <person name="Okada N."/>
            <person name="Kuhara S."/>
            <person name="Hattori M."/>
            <person name="Hayashi T."/>
            <person name="Ohnishi Y."/>
        </authorList>
    </citation>
    <scope>NUCLEOTIDE SEQUENCE [LARGE SCALE GENOMIC DNA]</scope>
    <source>
        <strain>YCH46</strain>
    </source>
</reference>
<proteinExistence type="inferred from homology"/>